<reference key="1">
    <citation type="journal article" date="1995" name="EMBO J.">
        <title>Identification and characterization of three members of the human SR family of pre-mRNA splicing factors.</title>
        <authorList>
            <person name="Screaton G.R."/>
            <person name="Caceres J.F."/>
            <person name="Mayeda A."/>
            <person name="Bell M.V."/>
            <person name="Plebanski M."/>
            <person name="Jackson D.G."/>
            <person name="Bell J.I."/>
            <person name="Krainer A.R."/>
        </authorList>
    </citation>
    <scope>NUCLEOTIDE SEQUENCE [MRNA] (ISOFORMS SRP55-1; SRP55-2 AND SRP55-3)</scope>
    <source>
        <tissue>Colon</tissue>
    </source>
</reference>
<reference key="2">
    <citation type="journal article" date="2004" name="Nat. Genet.">
        <title>Complete sequencing and characterization of 21,243 full-length human cDNAs.</title>
        <authorList>
            <person name="Ota T."/>
            <person name="Suzuki Y."/>
            <person name="Nishikawa T."/>
            <person name="Otsuki T."/>
            <person name="Sugiyama T."/>
            <person name="Irie R."/>
            <person name="Wakamatsu A."/>
            <person name="Hayashi K."/>
            <person name="Sato H."/>
            <person name="Nagai K."/>
            <person name="Kimura K."/>
            <person name="Makita H."/>
            <person name="Sekine M."/>
            <person name="Obayashi M."/>
            <person name="Nishi T."/>
            <person name="Shibahara T."/>
            <person name="Tanaka T."/>
            <person name="Ishii S."/>
            <person name="Yamamoto J."/>
            <person name="Saito K."/>
            <person name="Kawai Y."/>
            <person name="Isono Y."/>
            <person name="Nakamura Y."/>
            <person name="Nagahari K."/>
            <person name="Murakami K."/>
            <person name="Yasuda T."/>
            <person name="Iwayanagi T."/>
            <person name="Wagatsuma M."/>
            <person name="Shiratori A."/>
            <person name="Sudo H."/>
            <person name="Hosoiri T."/>
            <person name="Kaku Y."/>
            <person name="Kodaira H."/>
            <person name="Kondo H."/>
            <person name="Sugawara M."/>
            <person name="Takahashi M."/>
            <person name="Kanda K."/>
            <person name="Yokoi T."/>
            <person name="Furuya T."/>
            <person name="Kikkawa E."/>
            <person name="Omura Y."/>
            <person name="Abe K."/>
            <person name="Kamihara K."/>
            <person name="Katsuta N."/>
            <person name="Sato K."/>
            <person name="Tanikawa M."/>
            <person name="Yamazaki M."/>
            <person name="Ninomiya K."/>
            <person name="Ishibashi T."/>
            <person name="Yamashita H."/>
            <person name="Murakawa K."/>
            <person name="Fujimori K."/>
            <person name="Tanai H."/>
            <person name="Kimata M."/>
            <person name="Watanabe M."/>
            <person name="Hiraoka S."/>
            <person name="Chiba Y."/>
            <person name="Ishida S."/>
            <person name="Ono Y."/>
            <person name="Takiguchi S."/>
            <person name="Watanabe S."/>
            <person name="Yosida M."/>
            <person name="Hotuta T."/>
            <person name="Kusano J."/>
            <person name="Kanehori K."/>
            <person name="Takahashi-Fujii A."/>
            <person name="Hara H."/>
            <person name="Tanase T.-O."/>
            <person name="Nomura Y."/>
            <person name="Togiya S."/>
            <person name="Komai F."/>
            <person name="Hara R."/>
            <person name="Takeuchi K."/>
            <person name="Arita M."/>
            <person name="Imose N."/>
            <person name="Musashino K."/>
            <person name="Yuuki H."/>
            <person name="Oshima A."/>
            <person name="Sasaki N."/>
            <person name="Aotsuka S."/>
            <person name="Yoshikawa Y."/>
            <person name="Matsunawa H."/>
            <person name="Ichihara T."/>
            <person name="Shiohata N."/>
            <person name="Sano S."/>
            <person name="Moriya S."/>
            <person name="Momiyama H."/>
            <person name="Satoh N."/>
            <person name="Takami S."/>
            <person name="Terashima Y."/>
            <person name="Suzuki O."/>
            <person name="Nakagawa S."/>
            <person name="Senoh A."/>
            <person name="Mizoguchi H."/>
            <person name="Goto Y."/>
            <person name="Shimizu F."/>
            <person name="Wakebe H."/>
            <person name="Hishigaki H."/>
            <person name="Watanabe T."/>
            <person name="Sugiyama A."/>
            <person name="Takemoto M."/>
            <person name="Kawakami B."/>
            <person name="Yamazaki M."/>
            <person name="Watanabe K."/>
            <person name="Kumagai A."/>
            <person name="Itakura S."/>
            <person name="Fukuzumi Y."/>
            <person name="Fujimori Y."/>
            <person name="Komiyama M."/>
            <person name="Tashiro H."/>
            <person name="Tanigami A."/>
            <person name="Fujiwara T."/>
            <person name="Ono T."/>
            <person name="Yamada K."/>
            <person name="Fujii Y."/>
            <person name="Ozaki K."/>
            <person name="Hirao M."/>
            <person name="Ohmori Y."/>
            <person name="Kawabata A."/>
            <person name="Hikiji T."/>
            <person name="Kobatake N."/>
            <person name="Inagaki H."/>
            <person name="Ikema Y."/>
            <person name="Okamoto S."/>
            <person name="Okitani R."/>
            <person name="Kawakami T."/>
            <person name="Noguchi S."/>
            <person name="Itoh T."/>
            <person name="Shigeta K."/>
            <person name="Senba T."/>
            <person name="Matsumura K."/>
            <person name="Nakajima Y."/>
            <person name="Mizuno T."/>
            <person name="Morinaga M."/>
            <person name="Sasaki M."/>
            <person name="Togashi T."/>
            <person name="Oyama M."/>
            <person name="Hata H."/>
            <person name="Watanabe M."/>
            <person name="Komatsu T."/>
            <person name="Mizushima-Sugano J."/>
            <person name="Satoh T."/>
            <person name="Shirai Y."/>
            <person name="Takahashi Y."/>
            <person name="Nakagawa K."/>
            <person name="Okumura K."/>
            <person name="Nagase T."/>
            <person name="Nomura N."/>
            <person name="Kikuchi H."/>
            <person name="Masuho Y."/>
            <person name="Yamashita R."/>
            <person name="Nakai K."/>
            <person name="Yada T."/>
            <person name="Nakamura Y."/>
            <person name="Ohara O."/>
            <person name="Isogai T."/>
            <person name="Sugano S."/>
        </authorList>
    </citation>
    <scope>NUCLEOTIDE SEQUENCE [LARGE SCALE MRNA] (ISOFORM SRP55-2)</scope>
    <source>
        <tissue>Placenta</tissue>
    </source>
</reference>
<reference key="3">
    <citation type="journal article" date="2001" name="Nature">
        <title>The DNA sequence and comparative analysis of human chromosome 20.</title>
        <authorList>
            <person name="Deloukas P."/>
            <person name="Matthews L.H."/>
            <person name="Ashurst J.L."/>
            <person name="Burton J."/>
            <person name="Gilbert J.G.R."/>
            <person name="Jones M."/>
            <person name="Stavrides G."/>
            <person name="Almeida J.P."/>
            <person name="Babbage A.K."/>
            <person name="Bagguley C.L."/>
            <person name="Bailey J."/>
            <person name="Barlow K.F."/>
            <person name="Bates K.N."/>
            <person name="Beard L.M."/>
            <person name="Beare D.M."/>
            <person name="Beasley O.P."/>
            <person name="Bird C.P."/>
            <person name="Blakey S.E."/>
            <person name="Bridgeman A.M."/>
            <person name="Brown A.J."/>
            <person name="Buck D."/>
            <person name="Burrill W.D."/>
            <person name="Butler A.P."/>
            <person name="Carder C."/>
            <person name="Carter N.P."/>
            <person name="Chapman J.C."/>
            <person name="Clamp M."/>
            <person name="Clark G."/>
            <person name="Clark L.N."/>
            <person name="Clark S.Y."/>
            <person name="Clee C.M."/>
            <person name="Clegg S."/>
            <person name="Cobley V.E."/>
            <person name="Collier R.E."/>
            <person name="Connor R.E."/>
            <person name="Corby N.R."/>
            <person name="Coulson A."/>
            <person name="Coville G.J."/>
            <person name="Deadman R."/>
            <person name="Dhami P.D."/>
            <person name="Dunn M."/>
            <person name="Ellington A.G."/>
            <person name="Frankland J.A."/>
            <person name="Fraser A."/>
            <person name="French L."/>
            <person name="Garner P."/>
            <person name="Grafham D.V."/>
            <person name="Griffiths C."/>
            <person name="Griffiths M.N.D."/>
            <person name="Gwilliam R."/>
            <person name="Hall R.E."/>
            <person name="Hammond S."/>
            <person name="Harley J.L."/>
            <person name="Heath P.D."/>
            <person name="Ho S."/>
            <person name="Holden J.L."/>
            <person name="Howden P.J."/>
            <person name="Huckle E."/>
            <person name="Hunt A.R."/>
            <person name="Hunt S.E."/>
            <person name="Jekosch K."/>
            <person name="Johnson C.M."/>
            <person name="Johnson D."/>
            <person name="Kay M.P."/>
            <person name="Kimberley A.M."/>
            <person name="King A."/>
            <person name="Knights A."/>
            <person name="Laird G.K."/>
            <person name="Lawlor S."/>
            <person name="Lehvaeslaiho M.H."/>
            <person name="Leversha M.A."/>
            <person name="Lloyd C."/>
            <person name="Lloyd D.M."/>
            <person name="Lovell J.D."/>
            <person name="Marsh V.L."/>
            <person name="Martin S.L."/>
            <person name="McConnachie L.J."/>
            <person name="McLay K."/>
            <person name="McMurray A.A."/>
            <person name="Milne S.A."/>
            <person name="Mistry D."/>
            <person name="Moore M.J.F."/>
            <person name="Mullikin J.C."/>
            <person name="Nickerson T."/>
            <person name="Oliver K."/>
            <person name="Parker A."/>
            <person name="Patel R."/>
            <person name="Pearce T.A.V."/>
            <person name="Peck A.I."/>
            <person name="Phillimore B.J.C.T."/>
            <person name="Prathalingam S.R."/>
            <person name="Plumb R.W."/>
            <person name="Ramsay H."/>
            <person name="Rice C.M."/>
            <person name="Ross M.T."/>
            <person name="Scott C.E."/>
            <person name="Sehra H.K."/>
            <person name="Shownkeen R."/>
            <person name="Sims S."/>
            <person name="Skuce C.D."/>
            <person name="Smith M.L."/>
            <person name="Soderlund C."/>
            <person name="Steward C.A."/>
            <person name="Sulston J.E."/>
            <person name="Swann R.M."/>
            <person name="Sycamore N."/>
            <person name="Taylor R."/>
            <person name="Tee L."/>
            <person name="Thomas D.W."/>
            <person name="Thorpe A."/>
            <person name="Tracey A."/>
            <person name="Tromans A.C."/>
            <person name="Vaudin M."/>
            <person name="Wall M."/>
            <person name="Wallis J.M."/>
            <person name="Whitehead S.L."/>
            <person name="Whittaker P."/>
            <person name="Willey D.L."/>
            <person name="Williams L."/>
            <person name="Williams S.A."/>
            <person name="Wilming L."/>
            <person name="Wray P.W."/>
            <person name="Hubbard T."/>
            <person name="Durbin R.M."/>
            <person name="Bentley D.R."/>
            <person name="Beck S."/>
            <person name="Rogers J."/>
        </authorList>
    </citation>
    <scope>NUCLEOTIDE SEQUENCE [LARGE SCALE GENOMIC DNA]</scope>
</reference>
<reference key="4">
    <citation type="submission" date="2005-09" db="EMBL/GenBank/DDBJ databases">
        <authorList>
            <person name="Mural R.J."/>
            <person name="Istrail S."/>
            <person name="Sutton G.G."/>
            <person name="Florea L."/>
            <person name="Halpern A.L."/>
            <person name="Mobarry C.M."/>
            <person name="Lippert R."/>
            <person name="Walenz B."/>
            <person name="Shatkay H."/>
            <person name="Dew I."/>
            <person name="Miller J.R."/>
            <person name="Flanigan M.J."/>
            <person name="Edwards N.J."/>
            <person name="Bolanos R."/>
            <person name="Fasulo D."/>
            <person name="Halldorsson B.V."/>
            <person name="Hannenhalli S."/>
            <person name="Turner R."/>
            <person name="Yooseph S."/>
            <person name="Lu F."/>
            <person name="Nusskern D.R."/>
            <person name="Shue B.C."/>
            <person name="Zheng X.H."/>
            <person name="Zhong F."/>
            <person name="Delcher A.L."/>
            <person name="Huson D.H."/>
            <person name="Kravitz S.A."/>
            <person name="Mouchard L."/>
            <person name="Reinert K."/>
            <person name="Remington K.A."/>
            <person name="Clark A.G."/>
            <person name="Waterman M.S."/>
            <person name="Eichler E.E."/>
            <person name="Adams M.D."/>
            <person name="Hunkapiller M.W."/>
            <person name="Myers E.W."/>
            <person name="Venter J.C."/>
        </authorList>
    </citation>
    <scope>NUCLEOTIDE SEQUENCE [LARGE SCALE GENOMIC DNA]</scope>
</reference>
<reference key="5">
    <citation type="journal article" date="2004" name="Genome Res.">
        <title>The status, quality, and expansion of the NIH full-length cDNA project: the Mammalian Gene Collection (MGC).</title>
        <authorList>
            <consortium name="The MGC Project Team"/>
        </authorList>
    </citation>
    <scope>NUCLEOTIDE SEQUENCE [LARGE SCALE MRNA] (ISOFORM SRP55-1)</scope>
    <source>
        <tissue>Placenta</tissue>
    </source>
</reference>
<reference key="6">
    <citation type="journal article" date="1992" name="Genes Dev.">
        <title>SR proteins: a conserved family of pre-mRNA splicing factors.</title>
        <authorList>
            <person name="Zahler A.M."/>
            <person name="Lane W.S."/>
            <person name="Stolk J.A."/>
            <person name="Roth M.B."/>
        </authorList>
    </citation>
    <scope>PROTEIN SEQUENCE OF 21-27 AND 47-55</scope>
</reference>
<reference key="7">
    <citation type="journal article" date="2000" name="Mol. Cell. Biol.">
        <title>Identification and characterization of a novel serine-arginine-rich splicing regulatory protein.</title>
        <authorList>
            <person name="Barnard D.C."/>
            <person name="Patton J.G."/>
        </authorList>
    </citation>
    <scope>INTERACTION WITH SREK1</scope>
</reference>
<reference key="8">
    <citation type="journal article" date="2003" name="Biochemistry">
        <title>SRp55 is a regulator of calcitonin/CGRP alternative RNA splicing.</title>
        <authorList>
            <person name="Tran Q."/>
            <person name="Roesser J.R."/>
        </authorList>
    </citation>
    <scope>SUBCELLULAR LOCATION</scope>
    <scope>FUNCTION</scope>
</reference>
<reference key="9">
    <citation type="journal article" date="2004" name="J. Neurochem.">
        <title>Tau exon 10, whose missplicing causes frontotemporal dementia, is regulated by an intricate interplay of cis elements and trans factors.</title>
        <authorList>
            <person name="Wang J."/>
            <person name="Gao Q.S."/>
            <person name="Wang Y."/>
            <person name="Lafyatis R."/>
            <person name="Stamm S."/>
            <person name="Andreadis A."/>
        </authorList>
    </citation>
    <scope>FUNCTION</scope>
</reference>
<reference key="10">
    <citation type="journal article" date="2006" name="Cell">
        <title>Global, in vivo, and site-specific phosphorylation dynamics in signaling networks.</title>
        <authorList>
            <person name="Olsen J.V."/>
            <person name="Blagoev B."/>
            <person name="Gnad F."/>
            <person name="Macek B."/>
            <person name="Kumar C."/>
            <person name="Mortensen P."/>
            <person name="Mann M."/>
        </authorList>
    </citation>
    <scope>PHOSPHORYLATION [LARGE SCALE ANALYSIS] AT SER-45; SER-314 AND SER-316</scope>
    <scope>IDENTIFICATION BY MASS SPECTROMETRY [LARGE SCALE ANALYSIS]</scope>
    <source>
        <tissue>Cervix carcinoma</tissue>
    </source>
</reference>
<reference key="11">
    <citation type="journal article" date="2008" name="Proc. Natl. Acad. Sci. U.S.A.">
        <title>A quantitative atlas of mitotic phosphorylation.</title>
        <authorList>
            <person name="Dephoure N."/>
            <person name="Zhou C."/>
            <person name="Villen J."/>
            <person name="Beausoleil S.A."/>
            <person name="Bakalarski C.E."/>
            <person name="Elledge S.J."/>
            <person name="Gygi S.P."/>
        </authorList>
    </citation>
    <scope>PHOSPHORYLATION [LARGE SCALE ANALYSIS] AT SER-299 AND SER-303</scope>
    <scope>IDENTIFICATION BY MASS SPECTROMETRY [LARGE SCALE ANALYSIS]</scope>
    <source>
        <tissue>Cervix carcinoma</tissue>
    </source>
</reference>
<reference key="12">
    <citation type="journal article" date="2009" name="Sci. Signal.">
        <title>Quantitative phosphoproteomic analysis of T cell receptor signaling reveals system-wide modulation of protein-protein interactions.</title>
        <authorList>
            <person name="Mayya V."/>
            <person name="Lundgren D.H."/>
            <person name="Hwang S.-I."/>
            <person name="Rezaul K."/>
            <person name="Wu L."/>
            <person name="Eng J.K."/>
            <person name="Rodionov V."/>
            <person name="Han D.K."/>
        </authorList>
    </citation>
    <scope>PHOSPHORYLATION [LARGE SCALE ANALYSIS] AT SER-303</scope>
    <scope>IDENTIFICATION BY MASS SPECTROMETRY [LARGE SCALE ANALYSIS]</scope>
    <source>
        <tissue>Leukemic T-cell</tissue>
    </source>
</reference>
<reference key="13">
    <citation type="journal article" date="2010" name="Sci. Signal.">
        <title>Quantitative phosphoproteomics reveals widespread full phosphorylation site occupancy during mitosis.</title>
        <authorList>
            <person name="Olsen J.V."/>
            <person name="Vermeulen M."/>
            <person name="Santamaria A."/>
            <person name="Kumar C."/>
            <person name="Miller M.L."/>
            <person name="Jensen L.J."/>
            <person name="Gnad F."/>
            <person name="Cox J."/>
            <person name="Jensen T.S."/>
            <person name="Nigg E.A."/>
            <person name="Brunak S."/>
            <person name="Mann M."/>
        </authorList>
    </citation>
    <scope>PHOSPHORYLATION [LARGE SCALE ANALYSIS] AT SER-303; SER-314 AND SER-316</scope>
    <scope>IDENTIFICATION BY MASS SPECTROMETRY [LARGE SCALE ANALYSIS]</scope>
    <source>
        <tissue>Cervix carcinoma</tissue>
    </source>
</reference>
<reference key="14">
    <citation type="journal article" date="2011" name="BMC Syst. Biol.">
        <title>Initial characterization of the human central proteome.</title>
        <authorList>
            <person name="Burkard T.R."/>
            <person name="Planyavsky M."/>
            <person name="Kaupe I."/>
            <person name="Breitwieser F.P."/>
            <person name="Buerckstuemmer T."/>
            <person name="Bennett K.L."/>
            <person name="Superti-Furga G."/>
            <person name="Colinge J."/>
        </authorList>
    </citation>
    <scope>IDENTIFICATION BY MASS SPECTROMETRY [LARGE SCALE ANALYSIS]</scope>
</reference>
<reference key="15">
    <citation type="journal article" date="2011" name="Sci. Signal.">
        <title>System-wide temporal characterization of the proteome and phosphoproteome of human embryonic stem cell differentiation.</title>
        <authorList>
            <person name="Rigbolt K.T."/>
            <person name="Prokhorova T.A."/>
            <person name="Akimov V."/>
            <person name="Henningsen J."/>
            <person name="Johansen P.T."/>
            <person name="Kratchmarova I."/>
            <person name="Kassem M."/>
            <person name="Mann M."/>
            <person name="Olsen J.V."/>
            <person name="Blagoev B."/>
        </authorList>
    </citation>
    <scope>PHOSPHORYLATION [LARGE SCALE ANALYSIS] AT SER-81; SER-84; SER-303; SER-314 AND SER-316</scope>
    <scope>IDENTIFICATION BY MASS SPECTROMETRY [LARGE SCALE ANALYSIS]</scope>
</reference>
<reference evidence="12" key="16">
    <citation type="journal article" date="2012" name="J. Biol. Chem.">
        <title>Dual-specificity tyrosine phosphorylation-regulated kinase 1A (Dyrk1A) modulates serine/arginine-rich protein 55 (SRp55)-promoted Tau exon 10 inclusion.</title>
        <authorList>
            <person name="Yin X."/>
            <person name="Jin N."/>
            <person name="Gu J."/>
            <person name="Shi J."/>
            <person name="Zhou J."/>
            <person name="Gong C.X."/>
            <person name="Iqbal K."/>
            <person name="Grundke-Iqbal I."/>
            <person name="Liu F."/>
        </authorList>
    </citation>
    <scope>SUBCELLULAR LOCATION</scope>
    <scope>INTERACTION WITH DYRK1A</scope>
    <scope>FUNCTION</scope>
    <scope>PHOSPHORYLATION AT SER-303</scope>
    <scope>MUTAGENESIS OF SER-280; SER-303 AND SER-316</scope>
</reference>
<reference key="17">
    <citation type="journal article" date="2013" name="J. Proteome Res.">
        <title>Toward a comprehensive characterization of a human cancer cell phosphoproteome.</title>
        <authorList>
            <person name="Zhou H."/>
            <person name="Di Palma S."/>
            <person name="Preisinger C."/>
            <person name="Peng M."/>
            <person name="Polat A.N."/>
            <person name="Heck A.J."/>
            <person name="Mohammed S."/>
        </authorList>
    </citation>
    <scope>PHOSPHORYLATION [LARGE SCALE ANALYSIS] AT SER-297; SER-299 AND SER-303</scope>
    <scope>IDENTIFICATION BY MASS SPECTROMETRY [LARGE SCALE ANALYSIS]</scope>
    <source>
        <tissue>Cervix carcinoma</tissue>
        <tissue>Erythroleukemia</tissue>
    </source>
</reference>
<reference key="18">
    <citation type="journal article" date="2014" name="J. Proteomics">
        <title>An enzyme assisted RP-RPLC approach for in-depth analysis of human liver phosphoproteome.</title>
        <authorList>
            <person name="Bian Y."/>
            <person name="Song C."/>
            <person name="Cheng K."/>
            <person name="Dong M."/>
            <person name="Wang F."/>
            <person name="Huang J."/>
            <person name="Sun D."/>
            <person name="Wang L."/>
            <person name="Ye M."/>
            <person name="Zou H."/>
        </authorList>
    </citation>
    <scope>PHOSPHORYLATION [LARGE SCALE ANALYSIS] AT SER-45</scope>
    <scope>IDENTIFICATION BY MASS SPECTROMETRY [LARGE SCALE ANALYSIS]</scope>
    <source>
        <tissue>Liver</tissue>
    </source>
</reference>
<reference key="19">
    <citation type="journal article" date="2014" name="Nat. Struct. Mol. Biol.">
        <title>Splicing factor SRSF6 promotes hyperplasia of sensitized skin.</title>
        <authorList>
            <person name="Jensen M.A."/>
            <person name="Wilkinson J.E."/>
            <person name="Krainer A.R."/>
        </authorList>
    </citation>
    <scope>FUNCTION</scope>
    <scope>RNA-BINDING</scope>
</reference>
<reference key="20">
    <citation type="journal article" date="2017" name="Nat. Struct. Mol. Biol.">
        <title>Site-specific mapping of the human SUMO proteome reveals co-modification with phosphorylation.</title>
        <authorList>
            <person name="Hendriks I.A."/>
            <person name="Lyon D."/>
            <person name="Young C."/>
            <person name="Jensen L.J."/>
            <person name="Vertegaal A.C."/>
            <person name="Nielsen M.L."/>
        </authorList>
    </citation>
    <scope>SUMOYLATION [LARGE SCALE ANALYSIS] AT LYS-182</scope>
    <scope>IDENTIFICATION BY MASS SPECTROMETRY [LARGE SCALE ANALYSIS]</scope>
</reference>
<reference key="21">
    <citation type="journal article" date="2006" name="Science">
        <title>The consensus coding sequences of human breast and colorectal cancers.</title>
        <authorList>
            <person name="Sjoeblom T."/>
            <person name="Jones S."/>
            <person name="Wood L.D."/>
            <person name="Parsons D.W."/>
            <person name="Lin J."/>
            <person name="Barber T.D."/>
            <person name="Mandelker D."/>
            <person name="Leary R.J."/>
            <person name="Ptak J."/>
            <person name="Silliman N."/>
            <person name="Szabo S."/>
            <person name="Buckhaults P."/>
            <person name="Farrell C."/>
            <person name="Meeh P."/>
            <person name="Markowitz S.D."/>
            <person name="Willis J."/>
            <person name="Dawson D."/>
            <person name="Willson J.K.V."/>
            <person name="Gazdar A.F."/>
            <person name="Hartigan J."/>
            <person name="Wu L."/>
            <person name="Liu C."/>
            <person name="Parmigiani G."/>
            <person name="Park B.H."/>
            <person name="Bachman K.E."/>
            <person name="Papadopoulos N."/>
            <person name="Vogelstein B."/>
            <person name="Kinzler K.W."/>
            <person name="Velculescu V.E."/>
        </authorList>
    </citation>
    <scope>VARIANT [LARGE SCALE ANALYSIS] GLN-145</scope>
</reference>
<accession>Q13247</accession>
<accession>B7Z6J3</accession>
<accession>E1P5W6</accession>
<accession>Q13244</accession>
<accession>Q13245</accession>
<accession>Q96J06</accession>
<accession>Q9UJB8</accession>
<accession>Q9Y3N7</accession>
<evidence type="ECO:0000250" key="1">
    <source>
        <dbReference type="UniProtKB" id="Q3TWW8"/>
    </source>
</evidence>
<evidence type="ECO:0000255" key="2">
    <source>
        <dbReference type="PROSITE-ProRule" id="PRU00176"/>
    </source>
</evidence>
<evidence type="ECO:0000256" key="3">
    <source>
        <dbReference type="SAM" id="MobiDB-lite"/>
    </source>
</evidence>
<evidence type="ECO:0000269" key="4">
    <source>
    </source>
</evidence>
<evidence type="ECO:0000269" key="5">
    <source>
    </source>
</evidence>
<evidence type="ECO:0000269" key="6">
    <source>
    </source>
</evidence>
<evidence type="ECO:0000269" key="7">
    <source>
    </source>
</evidence>
<evidence type="ECO:0000269" key="8">
    <source>
    </source>
</evidence>
<evidence type="ECO:0000269" key="9">
    <source>
    </source>
</evidence>
<evidence type="ECO:0000303" key="10">
    <source>
    </source>
</evidence>
<evidence type="ECO:0000303" key="11">
    <source>
    </source>
</evidence>
<evidence type="ECO:0000305" key="12"/>
<evidence type="ECO:0007744" key="13">
    <source>
    </source>
</evidence>
<evidence type="ECO:0007744" key="14">
    <source>
    </source>
</evidence>
<evidence type="ECO:0007744" key="15">
    <source>
    </source>
</evidence>
<evidence type="ECO:0007744" key="16">
    <source>
    </source>
</evidence>
<evidence type="ECO:0007744" key="17">
    <source>
    </source>
</evidence>
<evidence type="ECO:0007744" key="18">
    <source>
    </source>
</evidence>
<evidence type="ECO:0007744" key="19">
    <source>
    </source>
</evidence>
<evidence type="ECO:0007744" key="20">
    <source>
    </source>
</evidence>
<gene>
    <name type="primary">SRSF6</name>
    <name type="synonym">SFRS6</name>
    <name type="synonym">SRP55</name>
</gene>
<feature type="chain" id="PRO_0000081930" description="Serine/arginine-rich splicing factor 6">
    <location>
        <begin position="1"/>
        <end position="344"/>
    </location>
</feature>
<feature type="domain" description="RRM 1" evidence="2">
    <location>
        <begin position="1"/>
        <end position="72"/>
    </location>
</feature>
<feature type="domain" description="RRM 2" evidence="2">
    <location>
        <begin position="110"/>
        <end position="183"/>
    </location>
</feature>
<feature type="region of interest" description="Disordered" evidence="3">
    <location>
        <begin position="75"/>
        <end position="103"/>
    </location>
</feature>
<feature type="region of interest" description="Disordered" evidence="3">
    <location>
        <begin position="176"/>
        <end position="344"/>
    </location>
</feature>
<feature type="compositionally biased region" description="Basic residues" evidence="3">
    <location>
        <begin position="185"/>
        <end position="250"/>
    </location>
</feature>
<feature type="compositionally biased region" description="Basic and acidic residues" evidence="3">
    <location>
        <begin position="264"/>
        <end position="273"/>
    </location>
</feature>
<feature type="compositionally biased region" description="Basic and acidic residues" evidence="3">
    <location>
        <begin position="280"/>
        <end position="291"/>
    </location>
</feature>
<feature type="compositionally biased region" description="Basic residues" evidence="3">
    <location>
        <begin position="322"/>
        <end position="344"/>
    </location>
</feature>
<feature type="modified residue" description="Phosphoserine" evidence="13 19">
    <location>
        <position position="45"/>
    </location>
</feature>
<feature type="modified residue" description="Phosphoserine" evidence="17">
    <location>
        <position position="81"/>
    </location>
</feature>
<feature type="modified residue" description="Phosphoserine" evidence="17">
    <location>
        <position position="84"/>
    </location>
</feature>
<feature type="modified residue" description="N6-acetyllysine" evidence="1">
    <location>
        <position position="165"/>
    </location>
</feature>
<feature type="modified residue" description="Phosphoserine" evidence="18">
    <location>
        <position position="297"/>
    </location>
</feature>
<feature type="modified residue" description="Phosphoserine" evidence="14 18">
    <location>
        <position position="299"/>
    </location>
</feature>
<feature type="modified residue" description="Phosphoserine; by DYRK1A" evidence="8 14 15 16 17 18">
    <location>
        <position position="303"/>
    </location>
</feature>
<feature type="modified residue" description="Phosphoserine" evidence="13 16 17">
    <location>
        <position position="314"/>
    </location>
</feature>
<feature type="modified residue" description="Phosphoserine" evidence="13 16 17">
    <location>
        <position position="316"/>
    </location>
</feature>
<feature type="cross-link" description="Glycyl lysine isopeptide (Lys-Gly) (interchain with G-Cter in SUMO2)" evidence="20">
    <location>
        <position position="182"/>
    </location>
</feature>
<feature type="splice variant" id="VSP_005869" description="In isoform SRP55-2." evidence="10 11">
    <original>SGGGGYSSRRTSGRDKYGPPVRTEYRLIVENLSSRCSWQDLKDFMRQAGE</original>
    <variation>MTNGAEAVSTEAKMTAFPDWPWLFHTLCDPCPMTLWLTLPEAMTTAAFCH</variation>
    <location>
        <begin position="86"/>
        <end position="135"/>
    </location>
</feature>
<feature type="splice variant" id="VSP_005870" description="In isoform SRP55-2." evidence="10 11">
    <location>
        <begin position="136"/>
        <end position="344"/>
    </location>
</feature>
<feature type="splice variant" id="VSP_005871" description="In isoform SRP55-3." evidence="11">
    <original>RSVSPPPKRATSRSRSRSRSKSRSRSRSSSRD</original>
    <variation>LKLGARFMSQQGTESLYSLASSC</variation>
    <location>
        <begin position="313"/>
        <end position="344"/>
    </location>
</feature>
<feature type="sequence variant" id="VAR_035489" description="In a colorectal cancer sample; somatic mutation; dbSNP:rs2017559129." evidence="7">
    <original>R</original>
    <variation>Q</variation>
    <location>
        <position position="145"/>
    </location>
</feature>
<feature type="mutagenesis site" description="No effect on regulation of alternative splicing of MAPT/Tau exon 10 by DYRK1A." evidence="8">
    <original>S</original>
    <variation>A</variation>
    <location>
        <position position="280"/>
    </location>
</feature>
<feature type="mutagenesis site" description="Abolishes regulatory effect of DYRK1A on alternative splicing of MAPT/Tau exon 10." evidence="8">
    <original>S</original>
    <variation>A</variation>
    <location>
        <position position="303"/>
    </location>
</feature>
<feature type="mutagenesis site" description="No effect on regulation of alternative splicing of MAPT/Tau exon 10 by DYRK1A." evidence="8">
    <original>S</original>
    <variation>A</variation>
    <location>
        <position position="316"/>
    </location>
</feature>
<feature type="sequence conflict" description="In Ref. 1; AAA93073/AAA93071/AAA93072." evidence="12" ref="1">
    <original>R</original>
    <variation>H</variation>
    <location>
        <position position="64"/>
    </location>
</feature>
<dbReference type="EMBL" id="U30883">
    <property type="protein sequence ID" value="AAA93073.1"/>
    <property type="molecule type" value="mRNA"/>
</dbReference>
<dbReference type="EMBL" id="U30828">
    <property type="protein sequence ID" value="AAA93071.1"/>
    <property type="molecule type" value="mRNA"/>
</dbReference>
<dbReference type="EMBL" id="U30829">
    <property type="protein sequence ID" value="AAA93072.1"/>
    <property type="molecule type" value="mRNA"/>
</dbReference>
<dbReference type="EMBL" id="AK300411">
    <property type="protein sequence ID" value="BAH13279.1"/>
    <property type="molecule type" value="mRNA"/>
</dbReference>
<dbReference type="EMBL" id="AL031681">
    <property type="status" value="NOT_ANNOTATED_CDS"/>
    <property type="molecule type" value="Genomic_DNA"/>
</dbReference>
<dbReference type="EMBL" id="CH471077">
    <property type="protein sequence ID" value="EAW75964.1"/>
    <property type="molecule type" value="Genomic_DNA"/>
</dbReference>
<dbReference type="EMBL" id="CH471077">
    <property type="protein sequence ID" value="EAW75967.1"/>
    <property type="molecule type" value="Genomic_DNA"/>
</dbReference>
<dbReference type="EMBL" id="BC006832">
    <property type="protein sequence ID" value="AAH06832.1"/>
    <property type="molecule type" value="mRNA"/>
</dbReference>
<dbReference type="CCDS" id="CCDS13318.1">
    <molecule id="Q13247-1"/>
</dbReference>
<dbReference type="PIR" id="S59043">
    <property type="entry name" value="S59043"/>
</dbReference>
<dbReference type="RefSeq" id="NP_006266.2">
    <molecule id="Q13247-1"/>
    <property type="nucleotide sequence ID" value="NM_006275.5"/>
</dbReference>
<dbReference type="RefSeq" id="XP_047296328.1">
    <molecule id="Q13247-2"/>
    <property type="nucleotide sequence ID" value="XM_047440372.1"/>
</dbReference>
<dbReference type="RefSeq" id="XP_054179816.1">
    <molecule id="Q13247-2"/>
    <property type="nucleotide sequence ID" value="XM_054323841.1"/>
</dbReference>
<dbReference type="SMR" id="Q13247"/>
<dbReference type="BioGRID" id="112329">
    <property type="interactions" value="529"/>
</dbReference>
<dbReference type="CORUM" id="Q13247"/>
<dbReference type="FunCoup" id="Q13247">
    <property type="interactions" value="2916"/>
</dbReference>
<dbReference type="IntAct" id="Q13247">
    <property type="interactions" value="388"/>
</dbReference>
<dbReference type="MINT" id="Q13247"/>
<dbReference type="STRING" id="9606.ENSP00000244020"/>
<dbReference type="BindingDB" id="Q13247"/>
<dbReference type="ChEMBL" id="CHEMBL5169149"/>
<dbReference type="GlyGen" id="Q13247">
    <property type="glycosylation" value="3 sites, 1 O-linked glycan (3 sites)"/>
</dbReference>
<dbReference type="iPTMnet" id="Q13247"/>
<dbReference type="PhosphoSitePlus" id="Q13247"/>
<dbReference type="SwissPalm" id="Q13247"/>
<dbReference type="BioMuta" id="SRSF6"/>
<dbReference type="DMDM" id="20981728"/>
<dbReference type="jPOST" id="Q13247"/>
<dbReference type="MassIVE" id="Q13247"/>
<dbReference type="PaxDb" id="9606-ENSP00000244020"/>
<dbReference type="PeptideAtlas" id="Q13247"/>
<dbReference type="ProteomicsDB" id="59250">
    <molecule id="Q13247-1"/>
</dbReference>
<dbReference type="ProteomicsDB" id="59251">
    <molecule id="Q13247-2"/>
</dbReference>
<dbReference type="ProteomicsDB" id="59252">
    <molecule id="Q13247-3"/>
</dbReference>
<dbReference type="Pumba" id="Q13247"/>
<dbReference type="TopDownProteomics" id="Q13247-1">
    <molecule id="Q13247-1"/>
</dbReference>
<dbReference type="Antibodypedia" id="27122">
    <property type="antibodies" value="119 antibodies from 29 providers"/>
</dbReference>
<dbReference type="DNASU" id="6431"/>
<dbReference type="Ensembl" id="ENST00000244020.5">
    <molecule id="Q13247-1"/>
    <property type="protein sequence ID" value="ENSP00000244020.3"/>
    <property type="gene ID" value="ENSG00000124193.16"/>
</dbReference>
<dbReference type="Ensembl" id="ENST00000483871.6">
    <molecule id="Q13247-2"/>
    <property type="protein sequence ID" value="ENSP00000433544.1"/>
    <property type="gene ID" value="ENSG00000124193.16"/>
</dbReference>
<dbReference type="GeneID" id="6431"/>
<dbReference type="KEGG" id="hsa:6431"/>
<dbReference type="MANE-Select" id="ENST00000244020.5">
    <property type="protein sequence ID" value="ENSP00000244020.3"/>
    <property type="RefSeq nucleotide sequence ID" value="NM_006275.6"/>
    <property type="RefSeq protein sequence ID" value="NP_006266.2"/>
</dbReference>
<dbReference type="UCSC" id="uc010zwg.3">
    <molecule id="Q13247-1"/>
    <property type="organism name" value="human"/>
</dbReference>
<dbReference type="AGR" id="HGNC:10788"/>
<dbReference type="CTD" id="6431"/>
<dbReference type="DisGeNET" id="6431"/>
<dbReference type="GeneCards" id="SRSF6"/>
<dbReference type="HGNC" id="HGNC:10788">
    <property type="gene designation" value="SRSF6"/>
</dbReference>
<dbReference type="HPA" id="ENSG00000124193">
    <property type="expression patterns" value="Low tissue specificity"/>
</dbReference>
<dbReference type="MIM" id="601944">
    <property type="type" value="gene"/>
</dbReference>
<dbReference type="neXtProt" id="NX_Q13247"/>
<dbReference type="OpenTargets" id="ENSG00000124193"/>
<dbReference type="PharmGKB" id="PA35704"/>
<dbReference type="VEuPathDB" id="HostDB:ENSG00000124193"/>
<dbReference type="eggNOG" id="KOG0106">
    <property type="taxonomic scope" value="Eukaryota"/>
</dbReference>
<dbReference type="GeneTree" id="ENSGT00940000155448"/>
<dbReference type="HOGENOM" id="CLU_1916372_0_0_1"/>
<dbReference type="InParanoid" id="Q13247"/>
<dbReference type="OMA" id="HQPAKAH"/>
<dbReference type="OrthoDB" id="1099063at2759"/>
<dbReference type="PAN-GO" id="Q13247">
    <property type="GO annotations" value="4 GO annotations based on evolutionary models"/>
</dbReference>
<dbReference type="PhylomeDB" id="Q13247"/>
<dbReference type="TreeFam" id="TF351335"/>
<dbReference type="PathwayCommons" id="Q13247"/>
<dbReference type="Reactome" id="R-HSA-159236">
    <property type="pathway name" value="Transport of Mature mRNA derived from an Intron-Containing Transcript"/>
</dbReference>
<dbReference type="Reactome" id="R-HSA-72163">
    <property type="pathway name" value="mRNA Splicing - Major Pathway"/>
</dbReference>
<dbReference type="Reactome" id="R-HSA-72165">
    <property type="pathway name" value="mRNA Splicing - Minor Pathway"/>
</dbReference>
<dbReference type="Reactome" id="R-HSA-72187">
    <property type="pathway name" value="mRNA 3'-end processing"/>
</dbReference>
<dbReference type="Reactome" id="R-HSA-72203">
    <property type="pathway name" value="Processing of Capped Intron-Containing Pre-mRNA"/>
</dbReference>
<dbReference type="Reactome" id="R-HSA-73856">
    <property type="pathway name" value="RNA Polymerase II Transcription Termination"/>
</dbReference>
<dbReference type="SignaLink" id="Q13247"/>
<dbReference type="BioGRID-ORCS" id="6431">
    <property type="hits" value="450 hits in 1169 CRISPR screens"/>
</dbReference>
<dbReference type="CD-CODE" id="232F8A39">
    <property type="entry name" value="P-body"/>
</dbReference>
<dbReference type="CD-CODE" id="804901D1">
    <property type="entry name" value="Nuclear speckle"/>
</dbReference>
<dbReference type="CD-CODE" id="91857CE7">
    <property type="entry name" value="Nucleolus"/>
</dbReference>
<dbReference type="ChiTaRS" id="SRSF6">
    <property type="organism name" value="human"/>
</dbReference>
<dbReference type="GeneWiki" id="SFRS6"/>
<dbReference type="GenomeRNAi" id="6431"/>
<dbReference type="Pharos" id="Q13247">
    <property type="development level" value="Tbio"/>
</dbReference>
<dbReference type="PRO" id="PR:Q13247"/>
<dbReference type="Proteomes" id="UP000005640">
    <property type="component" value="Chromosome 20"/>
</dbReference>
<dbReference type="RNAct" id="Q13247">
    <property type="molecule type" value="protein"/>
</dbReference>
<dbReference type="Bgee" id="ENSG00000124193">
    <property type="expression patterns" value="Expressed in right uterine tube and 204 other cell types or tissues"/>
</dbReference>
<dbReference type="ExpressionAtlas" id="Q13247">
    <property type="expression patterns" value="baseline and differential"/>
</dbReference>
<dbReference type="GO" id="GO:0016607">
    <property type="term" value="C:nuclear speck"/>
    <property type="evidence" value="ECO:0000314"/>
    <property type="project" value="UniProtKB"/>
</dbReference>
<dbReference type="GO" id="GO:0005654">
    <property type="term" value="C:nucleoplasm"/>
    <property type="evidence" value="ECO:0000304"/>
    <property type="project" value="Reactome"/>
</dbReference>
<dbReference type="GO" id="GO:0036002">
    <property type="term" value="F:pre-mRNA binding"/>
    <property type="evidence" value="ECO:0000314"/>
    <property type="project" value="UniProtKB"/>
</dbReference>
<dbReference type="GO" id="GO:0003723">
    <property type="term" value="F:RNA binding"/>
    <property type="evidence" value="ECO:0000314"/>
    <property type="project" value="UniProtKB"/>
</dbReference>
<dbReference type="GO" id="GO:0000380">
    <property type="term" value="P:alternative mRNA splicing, via spliceosome"/>
    <property type="evidence" value="ECO:0000314"/>
    <property type="project" value="UniProtKB"/>
</dbReference>
<dbReference type="GO" id="GO:0006376">
    <property type="term" value="P:mRNA splice site recognition"/>
    <property type="evidence" value="ECO:0000315"/>
    <property type="project" value="UniProtKB"/>
</dbReference>
<dbReference type="GO" id="GO:0000398">
    <property type="term" value="P:mRNA splicing, via spliceosome"/>
    <property type="evidence" value="ECO:0000318"/>
    <property type="project" value="GO_Central"/>
</dbReference>
<dbReference type="GO" id="GO:0045617">
    <property type="term" value="P:negative regulation of keratinocyte differentiation"/>
    <property type="evidence" value="ECO:0000315"/>
    <property type="project" value="UniProtKB"/>
</dbReference>
<dbReference type="GO" id="GO:0048025">
    <property type="term" value="P:negative regulation of mRNA splicing, via spliceosome"/>
    <property type="evidence" value="ECO:0000314"/>
    <property type="project" value="UniProtKB"/>
</dbReference>
<dbReference type="GO" id="GO:2000675">
    <property type="term" value="P:negative regulation of type B pancreatic cell apoptotic process"/>
    <property type="evidence" value="ECO:0007669"/>
    <property type="project" value="Ensembl"/>
</dbReference>
<dbReference type="GO" id="GO:0060501">
    <property type="term" value="P:positive regulation of epithelial cell proliferation involved in lung morphogenesis"/>
    <property type="evidence" value="ECO:0000314"/>
    <property type="project" value="MGI"/>
</dbReference>
<dbReference type="GO" id="GO:0000381">
    <property type="term" value="P:regulation of alternative mRNA splicing, via spliceosome"/>
    <property type="evidence" value="ECO:0000314"/>
    <property type="project" value="MGI"/>
</dbReference>
<dbReference type="GO" id="GO:0010837">
    <property type="term" value="P:regulation of keratinocyte proliferation"/>
    <property type="evidence" value="ECO:0000315"/>
    <property type="project" value="UniProtKB"/>
</dbReference>
<dbReference type="GO" id="GO:0061041">
    <property type="term" value="P:regulation of wound healing"/>
    <property type="evidence" value="ECO:0000315"/>
    <property type="project" value="UniProtKB"/>
</dbReference>
<dbReference type="GO" id="GO:0032868">
    <property type="term" value="P:response to insulin"/>
    <property type="evidence" value="ECO:0007669"/>
    <property type="project" value="Ensembl"/>
</dbReference>
<dbReference type="CDD" id="cd12596">
    <property type="entry name" value="RRM1_SRSF6"/>
    <property type="match status" value="1"/>
</dbReference>
<dbReference type="CDD" id="cd12600">
    <property type="entry name" value="RRM2_SRSF4_like"/>
    <property type="match status" value="1"/>
</dbReference>
<dbReference type="FunFam" id="3.30.70.330:FF:000028">
    <property type="entry name" value="Putative serine/arginine-rich splicing factor 4"/>
    <property type="match status" value="1"/>
</dbReference>
<dbReference type="FunFam" id="3.30.70.330:FF:000190">
    <property type="entry name" value="serine/arginine-rich splicing factor 4 isoform X1"/>
    <property type="match status" value="1"/>
</dbReference>
<dbReference type="Gene3D" id="3.30.70.330">
    <property type="match status" value="2"/>
</dbReference>
<dbReference type="InterPro" id="IPR012677">
    <property type="entry name" value="Nucleotide-bd_a/b_plait_sf"/>
</dbReference>
<dbReference type="InterPro" id="IPR035979">
    <property type="entry name" value="RBD_domain_sf"/>
</dbReference>
<dbReference type="InterPro" id="IPR047190">
    <property type="entry name" value="RRM2_SRSF4/6"/>
</dbReference>
<dbReference type="InterPro" id="IPR000504">
    <property type="entry name" value="RRM_dom"/>
</dbReference>
<dbReference type="InterPro" id="IPR050374">
    <property type="entry name" value="RRT5_SRSF_SR"/>
</dbReference>
<dbReference type="InterPro" id="IPR034511">
    <property type="entry name" value="SRSF6_RRM1"/>
</dbReference>
<dbReference type="PANTHER" id="PTHR23003">
    <property type="entry name" value="RNA RECOGNITION MOTIF RRM DOMAIN CONTAINING PROTEIN"/>
    <property type="match status" value="1"/>
</dbReference>
<dbReference type="PANTHER" id="PTHR23003:SF52">
    <property type="entry name" value="SERINE_ARGININE-RICH SPLICING FACTOR 6"/>
    <property type="match status" value="1"/>
</dbReference>
<dbReference type="Pfam" id="PF00076">
    <property type="entry name" value="RRM_1"/>
    <property type="match status" value="2"/>
</dbReference>
<dbReference type="SMART" id="SM00360">
    <property type="entry name" value="RRM"/>
    <property type="match status" value="2"/>
</dbReference>
<dbReference type="SUPFAM" id="SSF54928">
    <property type="entry name" value="RNA-binding domain, RBD"/>
    <property type="match status" value="2"/>
</dbReference>
<dbReference type="PROSITE" id="PS50102">
    <property type="entry name" value="RRM"/>
    <property type="match status" value="2"/>
</dbReference>
<sequence length="344" mass="39587">MPRVYIGRLSYNVREKDIQRFFSGYGRLLEVDLKNGYGFVEFEDSRDADDAVYELNGKELCGERVIVEHARGPRRDRDGYSYGSRSGGGGYSSRRTSGRDKYGPPVRTEYRLIVENLSSRCSWQDLKDFMRQAGEVTYADAHKERTNEGVIEFRSYSDMKRALDKLDGTEINGRNIRLIEDKPRTSHRRSYSGSRSRSRSRRRSRSRSRRSSRSRSRSISKSRSRSRSRSKGRSRSRSKGRKSRSKSKSKPKSDRGSHSHSRSRSKDEYEKSRSRSRSRSPKENGKGDIKSKSRSRSQSRSNSPLPVPPSKARSVSPPPKRATSRSRSRSRSKSRSRSRSSSRD</sequence>
<comment type="function">
    <text evidence="5 6 8 9">Plays a role in constitutive splicing and modulates the selection of alternative splice sites. Plays a role in the alternative splicing of MAPT/Tau exon 10. Binds to alternative exons of TNC pre-mRNA and promotes the expression of alternatively spliced TNC. Plays a role in wound healing and in the regulation of keratinocyte differentiation and proliferation via its role in alternative splicing.</text>
</comment>
<comment type="subunit">
    <text evidence="4 8">Binds SREK1/SFRS12. Interacts with DYRK1A.</text>
</comment>
<comment type="interaction">
    <interactant intactId="EBI-745230">
        <id>Q13247</id>
    </interactant>
    <interactant intactId="EBI-6654742">
        <id>Q9NQ29-3</id>
        <label>LUC7L</label>
    </interactant>
    <organismsDiffer>false</organismsDiffer>
    <experiments>3</experiments>
</comment>
<comment type="interaction">
    <interactant intactId="EBI-745230">
        <id>Q13247</id>
    </interactant>
    <interactant intactId="EBI-352851">
        <id>Q9Y383</id>
        <label>LUC7L2</label>
    </interactant>
    <organismsDiffer>false</organismsDiffer>
    <experiments>7</experiments>
</comment>
<comment type="interaction">
    <interactant intactId="EBI-745230">
        <id>Q13247</id>
    </interactant>
    <interactant intactId="EBI-395959">
        <id>Q15287</id>
        <label>RNPS1</label>
    </interactant>
    <organismsDiffer>false</organismsDiffer>
    <experiments>3</experiments>
</comment>
<comment type="interaction">
    <interactant intactId="EBI-745230">
        <id>Q13247</id>
    </interactant>
    <interactant intactId="EBI-539478">
        <id>Q96SB4</id>
        <label>SRPK1</label>
    </interactant>
    <organismsDiffer>false</organismsDiffer>
    <experiments>3</experiments>
</comment>
<comment type="interaction">
    <interactant intactId="EBI-745230">
        <id>Q13247</id>
    </interactant>
    <interactant intactId="EBI-722621">
        <id>Q08170</id>
        <label>SRSF4</label>
    </interactant>
    <organismsDiffer>false</organismsDiffer>
    <experiments>4</experiments>
</comment>
<comment type="subcellular location">
    <subcellularLocation>
        <location evidence="5 8">Nucleus</location>
    </subcellularLocation>
    <subcellularLocation>
        <location evidence="8">Nucleus speckle</location>
    </subcellularLocation>
</comment>
<comment type="alternative products">
    <event type="alternative splicing"/>
    <isoform>
        <id>Q13247-1</id>
        <name>SRP55-1</name>
        <sequence type="displayed"/>
    </isoform>
    <isoform>
        <id>Q13247-2</id>
        <name>SRP55-2</name>
        <sequence type="described" ref="VSP_005869 VSP_005870"/>
    </isoform>
    <isoform>
        <id>Q13247-3</id>
        <name>SRP55-3</name>
        <sequence type="described" ref="VSP_005871"/>
    </isoform>
</comment>
<comment type="PTM">
    <text evidence="8">Extensively phosphorylated on serine residues in the RS domain. Phosphorylated by DYRK1A, probably in the RS domain. Phosphorylation by DYRK1A modulates alternative splice site selection and inhibits the expression of MAPT/Tau exon 10.</text>
</comment>
<comment type="similarity">
    <text evidence="12">Belongs to the splicing factor SR family.</text>
</comment>
<organism>
    <name type="scientific">Homo sapiens</name>
    <name type="common">Human</name>
    <dbReference type="NCBI Taxonomy" id="9606"/>
    <lineage>
        <taxon>Eukaryota</taxon>
        <taxon>Metazoa</taxon>
        <taxon>Chordata</taxon>
        <taxon>Craniata</taxon>
        <taxon>Vertebrata</taxon>
        <taxon>Euteleostomi</taxon>
        <taxon>Mammalia</taxon>
        <taxon>Eutheria</taxon>
        <taxon>Euarchontoglires</taxon>
        <taxon>Primates</taxon>
        <taxon>Haplorrhini</taxon>
        <taxon>Catarrhini</taxon>
        <taxon>Hominidae</taxon>
        <taxon>Homo</taxon>
    </lineage>
</organism>
<protein>
    <recommendedName>
        <fullName>Serine/arginine-rich splicing factor 6</fullName>
    </recommendedName>
    <alternativeName>
        <fullName>Pre-mRNA-splicing factor SRP55</fullName>
    </alternativeName>
    <alternativeName>
        <fullName>Splicing factor, arginine/serine-rich 6</fullName>
    </alternativeName>
</protein>
<proteinExistence type="evidence at protein level"/>
<name>SRSF6_HUMAN</name>
<keyword id="KW-0007">Acetylation</keyword>
<keyword id="KW-0025">Alternative splicing</keyword>
<keyword id="KW-0903">Direct protein sequencing</keyword>
<keyword id="KW-1017">Isopeptide bond</keyword>
<keyword id="KW-0507">mRNA processing</keyword>
<keyword id="KW-0508">mRNA splicing</keyword>
<keyword id="KW-0539">Nucleus</keyword>
<keyword id="KW-0597">Phosphoprotein</keyword>
<keyword id="KW-1267">Proteomics identification</keyword>
<keyword id="KW-1185">Reference proteome</keyword>
<keyword id="KW-0677">Repeat</keyword>
<keyword id="KW-0678">Repressor</keyword>
<keyword id="KW-0694">RNA-binding</keyword>
<keyword id="KW-0832">Ubl conjugation</keyword>